<organism>
    <name type="scientific">Drosophila mauritiana</name>
    <name type="common">Fruit fly</name>
    <dbReference type="NCBI Taxonomy" id="7226"/>
    <lineage>
        <taxon>Eukaryota</taxon>
        <taxon>Metazoa</taxon>
        <taxon>Ecdysozoa</taxon>
        <taxon>Arthropoda</taxon>
        <taxon>Hexapoda</taxon>
        <taxon>Insecta</taxon>
        <taxon>Pterygota</taxon>
        <taxon>Neoptera</taxon>
        <taxon>Endopterygota</taxon>
        <taxon>Diptera</taxon>
        <taxon>Brachycera</taxon>
        <taxon>Muscomorpha</taxon>
        <taxon>Ephydroidea</taxon>
        <taxon>Drosophilidae</taxon>
        <taxon>Drosophila</taxon>
        <taxon>Sophophora</taxon>
    </lineage>
</organism>
<keyword id="KW-0456">Lyase</keyword>
<keyword id="KW-0808">Transferase</keyword>
<evidence type="ECO:0000250" key="1"/>
<evidence type="ECO:0000305" key="2"/>
<accession>P67804</accession>
<accession>P30105</accession>
<protein>
    <recommendedName>
        <fullName>Glutathione S-transferase 1-1</fullName>
        <ecNumber>2.5.1.18</ecNumber>
        <ecNumber>4.5.1.1</ecNumber>
    </recommendedName>
    <alternativeName>
        <fullName>DDT-dehydrochlorinase</fullName>
    </alternativeName>
    <alternativeName>
        <fullName>GST class-theta</fullName>
    </alternativeName>
</protein>
<comment type="function">
    <text evidence="1">Conjugation of reduced glutathione to a wide number of exogenous and endogenous hydrophobic electrophiles. Has DDT dehydrochlorinase activity (By similarity).</text>
</comment>
<comment type="catalytic activity">
    <reaction>
        <text>RX + glutathione = an S-substituted glutathione + a halide anion + H(+)</text>
        <dbReference type="Rhea" id="RHEA:16437"/>
        <dbReference type="ChEBI" id="CHEBI:15378"/>
        <dbReference type="ChEBI" id="CHEBI:16042"/>
        <dbReference type="ChEBI" id="CHEBI:17792"/>
        <dbReference type="ChEBI" id="CHEBI:57925"/>
        <dbReference type="ChEBI" id="CHEBI:90779"/>
        <dbReference type="EC" id="2.5.1.18"/>
    </reaction>
</comment>
<comment type="catalytic activity">
    <reaction>
        <text>1,1,1-trichloro-2,2-bis(4-chlorophenyl)ethane = 1,1-dichloro-2,2-bis(4-chlorophenyl)ethylene + chloride + H(+)</text>
        <dbReference type="Rhea" id="RHEA:19217"/>
        <dbReference type="ChEBI" id="CHEBI:15378"/>
        <dbReference type="ChEBI" id="CHEBI:16130"/>
        <dbReference type="ChEBI" id="CHEBI:16598"/>
        <dbReference type="ChEBI" id="CHEBI:17996"/>
        <dbReference type="EC" id="4.5.1.1"/>
    </reaction>
</comment>
<comment type="subunit">
    <text>Homodimer.</text>
</comment>
<comment type="similarity">
    <text evidence="2">Belongs to the GST superfamily. Theta family.</text>
</comment>
<dbReference type="EC" id="2.5.1.18"/>
<dbReference type="EC" id="4.5.1.1"/>
<dbReference type="EMBL" id="M84581">
    <property type="status" value="NOT_ANNOTATED_CDS"/>
    <property type="molecule type" value="Genomic_DNA"/>
</dbReference>
<dbReference type="SMR" id="P67804"/>
<dbReference type="Proteomes" id="UP000515162">
    <property type="component" value="Unplaced"/>
</dbReference>
<dbReference type="GO" id="GO:0018833">
    <property type="term" value="F:DDT-dehydrochlorinase activity"/>
    <property type="evidence" value="ECO:0007669"/>
    <property type="project" value="UniProtKB-EC"/>
</dbReference>
<dbReference type="GO" id="GO:0004364">
    <property type="term" value="F:glutathione transferase activity"/>
    <property type="evidence" value="ECO:0007669"/>
    <property type="project" value="UniProtKB-EC"/>
</dbReference>
<dbReference type="GO" id="GO:0006749">
    <property type="term" value="P:glutathione metabolic process"/>
    <property type="evidence" value="ECO:0007669"/>
    <property type="project" value="TreeGrafter"/>
</dbReference>
<dbReference type="CDD" id="cd03177">
    <property type="entry name" value="GST_C_Delta_Epsilon"/>
    <property type="match status" value="1"/>
</dbReference>
<dbReference type="CDD" id="cd03045">
    <property type="entry name" value="GST_N_Delta_Epsilon"/>
    <property type="match status" value="1"/>
</dbReference>
<dbReference type="FunFam" id="3.40.30.10:FF:000034">
    <property type="entry name" value="glutathione S-transferase 1"/>
    <property type="match status" value="1"/>
</dbReference>
<dbReference type="FunFam" id="1.20.1050.10:FF:000007">
    <property type="entry name" value="Glutathione S-transferase 1-1"/>
    <property type="match status" value="1"/>
</dbReference>
<dbReference type="Gene3D" id="1.20.1050.10">
    <property type="match status" value="1"/>
</dbReference>
<dbReference type="Gene3D" id="3.40.30.10">
    <property type="entry name" value="Glutaredoxin"/>
    <property type="match status" value="1"/>
</dbReference>
<dbReference type="InterPro" id="IPR010987">
    <property type="entry name" value="Glutathione-S-Trfase_C-like"/>
</dbReference>
<dbReference type="InterPro" id="IPR036282">
    <property type="entry name" value="Glutathione-S-Trfase_C_sf"/>
</dbReference>
<dbReference type="InterPro" id="IPR004045">
    <property type="entry name" value="Glutathione_S-Trfase_N"/>
</dbReference>
<dbReference type="InterPro" id="IPR004046">
    <property type="entry name" value="GST_C"/>
</dbReference>
<dbReference type="InterPro" id="IPR036249">
    <property type="entry name" value="Thioredoxin-like_sf"/>
</dbReference>
<dbReference type="PANTHER" id="PTHR43969">
    <property type="entry name" value="GLUTATHIONE S TRANSFERASE D10, ISOFORM A-RELATED"/>
    <property type="match status" value="1"/>
</dbReference>
<dbReference type="PANTHER" id="PTHR43969:SF9">
    <property type="entry name" value="GLUTATHIONE S TRANSFERASE D10, ISOFORM A-RELATED"/>
    <property type="match status" value="1"/>
</dbReference>
<dbReference type="Pfam" id="PF00043">
    <property type="entry name" value="GST_C"/>
    <property type="match status" value="1"/>
</dbReference>
<dbReference type="Pfam" id="PF02798">
    <property type="entry name" value="GST_N"/>
    <property type="match status" value="1"/>
</dbReference>
<dbReference type="SFLD" id="SFLDG01153">
    <property type="entry name" value="Main.4:_Theta-like"/>
    <property type="match status" value="1"/>
</dbReference>
<dbReference type="SFLD" id="SFLDG00358">
    <property type="entry name" value="Main_(cytGST)"/>
    <property type="match status" value="1"/>
</dbReference>
<dbReference type="SUPFAM" id="SSF47616">
    <property type="entry name" value="GST C-terminal domain-like"/>
    <property type="match status" value="1"/>
</dbReference>
<dbReference type="SUPFAM" id="SSF52833">
    <property type="entry name" value="Thioredoxin-like"/>
    <property type="match status" value="1"/>
</dbReference>
<dbReference type="PROSITE" id="PS50405">
    <property type="entry name" value="GST_CTER"/>
    <property type="match status" value="1"/>
</dbReference>
<dbReference type="PROSITE" id="PS50404">
    <property type="entry name" value="GST_NTER"/>
    <property type="match status" value="1"/>
</dbReference>
<feature type="chain" id="PRO_0000185949" description="Glutathione S-transferase 1-1">
    <location>
        <begin position="1" status="less than"/>
        <end position="200"/>
    </location>
</feature>
<feature type="domain" description="GST N-terminal">
    <location>
        <begin position="1" status="less than"/>
        <end position="73"/>
    </location>
</feature>
<feature type="domain" description="GST C-terminal">
    <location>
        <begin position="79"/>
        <end position="200"/>
    </location>
</feature>
<feature type="binding site" evidence="1">
    <location>
        <position position="2"/>
    </location>
    <ligand>
        <name>glutathione</name>
        <dbReference type="ChEBI" id="CHEBI:57925"/>
    </ligand>
</feature>
<feature type="binding site" evidence="1">
    <location>
        <begin position="43"/>
        <end position="45"/>
    </location>
    <ligand>
        <name>glutathione</name>
        <dbReference type="ChEBI" id="CHEBI:57925"/>
    </ligand>
</feature>
<feature type="binding site" evidence="1">
    <location>
        <begin position="57"/>
        <end position="59"/>
    </location>
    <ligand>
        <name>glutathione</name>
        <dbReference type="ChEBI" id="CHEBI:57925"/>
    </ligand>
</feature>
<feature type="non-terminal residue">
    <location>
        <position position="1"/>
    </location>
</feature>
<name>GSTT1_DROMA</name>
<proteinExistence type="inferred from homology"/>
<sequence length="200" mass="22567">GSSPCRSVIMTAKAVGVELNKKLLNLQAGEHLKPEFLKINPQHTIPTLVDNGFALWESRAIQVYLVEKYGKTDSLYPKCPKKRAVINQRLYFDMGTLYQSFANYYYPQVFAKAPADPEAFKKIESAFEFLNTFLEGQEYAAGDSLTVADIALVASVSTFEVAGFEISKYANVNKWYENAKKVTPGWSENWAGCLEFKKFF</sequence>
<reference key="1">
    <citation type="submission" date="1992-02" db="EMBL/GenBank/DDBJ databases">
        <title>Sequence divergence of glutathione S-transferase coding regions among seven species in the melanogaster subgroup of Drosophila.</title>
        <authorList>
            <person name="Hargis M.T."/>
            <person name="Cochrane B.J."/>
        </authorList>
    </citation>
    <scope>NUCLEOTIDE SEQUENCE [GENOMIC DNA]</scope>
</reference>
<gene>
    <name type="primary">GstD1</name>
    <name type="synonym">gst</name>
    <name type="synonym">GST1</name>
</gene>